<keyword id="KW-1015">Disulfide bond</keyword>
<keyword id="KW-0528">Neurotoxin</keyword>
<keyword id="KW-0964">Secreted</keyword>
<keyword id="KW-0732">Signal</keyword>
<keyword id="KW-0800">Toxin</keyword>
<sequence>MPKLEMMLLVLLILPLCYIDAVGPPPPWNMEDEIIEHWQKLHCHEISDLTPWILCSPEPLCGGKGCCAQGVCDCSGPACTCPPCL</sequence>
<evidence type="ECO:0000255" key="1"/>
<evidence type="ECO:0000303" key="2">
    <source>
    </source>
</evidence>
<evidence type="ECO:0000305" key="3"/>
<evidence type="ECO:0000305" key="4">
    <source>
    </source>
</evidence>
<evidence type="ECO:0000312" key="5">
    <source>
        <dbReference type="EMBL" id="ADZ76488.1"/>
    </source>
</evidence>
<protein>
    <recommendedName>
        <fullName evidence="2">Conotoxin Lt28.5</fullName>
    </recommendedName>
    <alternativeName>
        <fullName evidence="5">Conotoxin Lt15.6a</fullName>
    </alternativeName>
</protein>
<reference key="1">
    <citation type="journal article" date="2017" name="Peptides">
        <title>Cloning, expression and functional characterization of a D-superfamily conotoxin Lt28.1 with previously undescribed cysteine pattern.</title>
        <authorList>
            <person name="Lu J."/>
            <person name="Zhang K."/>
            <person name="Wang S."/>
            <person name="Sun T."/>
            <person name="Yu S."/>
            <person name="Dai Q."/>
            <person name="Liu Z."/>
        </authorList>
    </citation>
    <scope>NUCLEOTIDE SEQUENCE [MRNA]</scope>
    <source>
        <tissue>Venom duct</tissue>
    </source>
</reference>
<dbReference type="EMBL" id="HM003930">
    <property type="protein sequence ID" value="ADZ76488.1"/>
    <property type="molecule type" value="mRNA"/>
</dbReference>
<dbReference type="GO" id="GO:0005576">
    <property type="term" value="C:extracellular region"/>
    <property type="evidence" value="ECO:0007669"/>
    <property type="project" value="UniProtKB-SubCell"/>
</dbReference>
<dbReference type="GO" id="GO:0090729">
    <property type="term" value="F:toxin activity"/>
    <property type="evidence" value="ECO:0007669"/>
    <property type="project" value="UniProtKB-KW"/>
</dbReference>
<proteinExistence type="inferred from homology"/>
<name>CDS5_CONLT</name>
<comment type="function">
    <text evidence="3">Probable neurotoxin.</text>
</comment>
<comment type="subcellular location">
    <subcellularLocation>
        <location evidence="4">Secreted</location>
    </subcellularLocation>
</comment>
<comment type="tissue specificity">
    <text evidence="4">Expressed by the venom duct.</text>
</comment>
<comment type="domain">
    <text evidence="3">The cysteine framework is XXVIII (C-C-C-CC-C-C-C-C-C).</text>
</comment>
<comment type="PTM">
    <text evidence="3">Contains 5 disulfide bonds.</text>
</comment>
<comment type="similarity">
    <text evidence="3">Belongs to the conotoxin D superfamily.</text>
</comment>
<accession>F6JWV1</accession>
<feature type="signal peptide" evidence="1">
    <location>
        <begin position="1"/>
        <end position="21"/>
    </location>
</feature>
<feature type="propeptide" id="PRO_0000451015" evidence="4">
    <location>
        <begin position="22"/>
        <end position="40"/>
    </location>
</feature>
<feature type="chain" id="PRO_5003338680" description="Conotoxin Lt28.5" evidence="4">
    <location>
        <begin position="41"/>
        <end position="85"/>
    </location>
</feature>
<organism>
    <name type="scientific">Conus litteratus</name>
    <name type="common">Lettered cone</name>
    <dbReference type="NCBI Taxonomy" id="89445"/>
    <lineage>
        <taxon>Eukaryota</taxon>
        <taxon>Metazoa</taxon>
        <taxon>Spiralia</taxon>
        <taxon>Lophotrochozoa</taxon>
        <taxon>Mollusca</taxon>
        <taxon>Gastropoda</taxon>
        <taxon>Caenogastropoda</taxon>
        <taxon>Neogastropoda</taxon>
        <taxon>Conoidea</taxon>
        <taxon>Conidae</taxon>
        <taxon>Conus</taxon>
        <taxon>Elisaconus</taxon>
    </lineage>
</organism>